<evidence type="ECO:0000255" key="1">
    <source>
        <dbReference type="HAMAP-Rule" id="MF_00141"/>
    </source>
</evidence>
<reference key="1">
    <citation type="journal article" date="2008" name="PLoS ONE">
        <title>Genome sequence of a lancefield group C Streptococcus zooepidemicus strain causing epidemic nephritis: new information about an old disease.</title>
        <authorList>
            <person name="Beres S.B."/>
            <person name="Sesso R."/>
            <person name="Pinto S.W.L."/>
            <person name="Hoe N.P."/>
            <person name="Porcella S.F."/>
            <person name="Deleo F.R."/>
            <person name="Musser J.M."/>
        </authorList>
    </citation>
    <scope>NUCLEOTIDE SEQUENCE [LARGE SCALE GENOMIC DNA]</scope>
    <source>
        <strain>MGCS10565</strain>
    </source>
</reference>
<dbReference type="EMBL" id="CP001129">
    <property type="protein sequence ID" value="ACG61728.1"/>
    <property type="molecule type" value="Genomic_DNA"/>
</dbReference>
<dbReference type="RefSeq" id="WP_012515004.1">
    <property type="nucleotide sequence ID" value="NC_011134.1"/>
</dbReference>
<dbReference type="SMR" id="B4U161"/>
<dbReference type="GeneID" id="83704236"/>
<dbReference type="KEGG" id="sez:Sez_0352"/>
<dbReference type="HOGENOM" id="CLU_074944_3_0_9"/>
<dbReference type="UniPathway" id="UPA00345"/>
<dbReference type="Proteomes" id="UP000001873">
    <property type="component" value="Chromosome"/>
</dbReference>
<dbReference type="GO" id="GO:0005737">
    <property type="term" value="C:cytoplasm"/>
    <property type="evidence" value="ECO:0007669"/>
    <property type="project" value="UniProtKB-SubCell"/>
</dbReference>
<dbReference type="GO" id="GO:0003746">
    <property type="term" value="F:translation elongation factor activity"/>
    <property type="evidence" value="ECO:0007669"/>
    <property type="project" value="UniProtKB-UniRule"/>
</dbReference>
<dbReference type="GO" id="GO:0043043">
    <property type="term" value="P:peptide biosynthetic process"/>
    <property type="evidence" value="ECO:0007669"/>
    <property type="project" value="InterPro"/>
</dbReference>
<dbReference type="CDD" id="cd04470">
    <property type="entry name" value="S1_EF-P_repeat_1"/>
    <property type="match status" value="1"/>
</dbReference>
<dbReference type="CDD" id="cd05794">
    <property type="entry name" value="S1_EF-P_repeat_2"/>
    <property type="match status" value="1"/>
</dbReference>
<dbReference type="FunFam" id="2.30.30.30:FF:000003">
    <property type="entry name" value="Elongation factor P"/>
    <property type="match status" value="1"/>
</dbReference>
<dbReference type="FunFam" id="2.40.50.140:FF:000004">
    <property type="entry name" value="Elongation factor P"/>
    <property type="match status" value="1"/>
</dbReference>
<dbReference type="FunFam" id="2.40.50.140:FF:000009">
    <property type="entry name" value="Elongation factor P"/>
    <property type="match status" value="1"/>
</dbReference>
<dbReference type="Gene3D" id="2.30.30.30">
    <property type="match status" value="1"/>
</dbReference>
<dbReference type="Gene3D" id="2.40.50.140">
    <property type="entry name" value="Nucleic acid-binding proteins"/>
    <property type="match status" value="2"/>
</dbReference>
<dbReference type="HAMAP" id="MF_00141">
    <property type="entry name" value="EF_P"/>
    <property type="match status" value="1"/>
</dbReference>
<dbReference type="InterPro" id="IPR015365">
    <property type="entry name" value="Elong-fact-P_C"/>
</dbReference>
<dbReference type="InterPro" id="IPR012340">
    <property type="entry name" value="NA-bd_OB-fold"/>
</dbReference>
<dbReference type="InterPro" id="IPR014722">
    <property type="entry name" value="Rib_uL2_dom2"/>
</dbReference>
<dbReference type="InterPro" id="IPR020599">
    <property type="entry name" value="Transl_elong_fac_P/YeiP"/>
</dbReference>
<dbReference type="InterPro" id="IPR013185">
    <property type="entry name" value="Transl_elong_KOW-like"/>
</dbReference>
<dbReference type="InterPro" id="IPR001059">
    <property type="entry name" value="Transl_elong_P/YeiP_cen"/>
</dbReference>
<dbReference type="InterPro" id="IPR013852">
    <property type="entry name" value="Transl_elong_P/YeiP_CS"/>
</dbReference>
<dbReference type="InterPro" id="IPR011768">
    <property type="entry name" value="Transl_elongation_fac_P"/>
</dbReference>
<dbReference type="InterPro" id="IPR008991">
    <property type="entry name" value="Translation_prot_SH3-like_sf"/>
</dbReference>
<dbReference type="NCBIfam" id="TIGR00038">
    <property type="entry name" value="efp"/>
    <property type="match status" value="1"/>
</dbReference>
<dbReference type="NCBIfam" id="NF001810">
    <property type="entry name" value="PRK00529.1"/>
    <property type="match status" value="1"/>
</dbReference>
<dbReference type="PANTHER" id="PTHR30053">
    <property type="entry name" value="ELONGATION FACTOR P"/>
    <property type="match status" value="1"/>
</dbReference>
<dbReference type="PANTHER" id="PTHR30053:SF12">
    <property type="entry name" value="ELONGATION FACTOR P (EF-P) FAMILY PROTEIN"/>
    <property type="match status" value="1"/>
</dbReference>
<dbReference type="Pfam" id="PF01132">
    <property type="entry name" value="EFP"/>
    <property type="match status" value="1"/>
</dbReference>
<dbReference type="Pfam" id="PF08207">
    <property type="entry name" value="EFP_N"/>
    <property type="match status" value="1"/>
</dbReference>
<dbReference type="Pfam" id="PF09285">
    <property type="entry name" value="Elong-fact-P_C"/>
    <property type="match status" value="1"/>
</dbReference>
<dbReference type="PIRSF" id="PIRSF005901">
    <property type="entry name" value="EF-P"/>
    <property type="match status" value="1"/>
</dbReference>
<dbReference type="SMART" id="SM01185">
    <property type="entry name" value="EFP"/>
    <property type="match status" value="1"/>
</dbReference>
<dbReference type="SMART" id="SM00841">
    <property type="entry name" value="Elong-fact-P_C"/>
    <property type="match status" value="1"/>
</dbReference>
<dbReference type="SUPFAM" id="SSF50249">
    <property type="entry name" value="Nucleic acid-binding proteins"/>
    <property type="match status" value="2"/>
</dbReference>
<dbReference type="SUPFAM" id="SSF50104">
    <property type="entry name" value="Translation proteins SH3-like domain"/>
    <property type="match status" value="1"/>
</dbReference>
<dbReference type="PROSITE" id="PS01275">
    <property type="entry name" value="EFP"/>
    <property type="match status" value="1"/>
</dbReference>
<accession>B4U161</accession>
<feature type="chain" id="PRO_1000096207" description="Elongation factor P">
    <location>
        <begin position="1"/>
        <end position="185"/>
    </location>
</feature>
<proteinExistence type="inferred from homology"/>
<gene>
    <name evidence="1" type="primary">efp</name>
    <name type="ordered locus">Sez_0352</name>
</gene>
<protein>
    <recommendedName>
        <fullName evidence="1">Elongation factor P</fullName>
        <shortName evidence="1">EF-P</shortName>
    </recommendedName>
</protein>
<sequence>MIEASKLRAGMTFEAEGKLIRVLEASHHKPGKGNTIMRMKLRDVRTGSTFDTTYRPDEKFEQAIIETVPAQYLYKMDDTAYFMNTETYDQYEIPVANVEQELLYILENSDVKIQFYGTEVIGVQVPTTVELTVTETQPSIKGATVTGSGKPATLETGLVVNVPDFIEVGQKLIINTAEGTYVSRA</sequence>
<comment type="function">
    <text evidence="1">Involved in peptide bond synthesis. Stimulates efficient translation and peptide-bond synthesis on native or reconstituted 70S ribosomes in vitro. Probably functions indirectly by altering the affinity of the ribosome for aminoacyl-tRNA, thus increasing their reactivity as acceptors for peptidyl transferase.</text>
</comment>
<comment type="pathway">
    <text evidence="1">Protein biosynthesis; polypeptide chain elongation.</text>
</comment>
<comment type="subcellular location">
    <subcellularLocation>
        <location evidence="1">Cytoplasm</location>
    </subcellularLocation>
</comment>
<comment type="similarity">
    <text evidence="1">Belongs to the elongation factor P family.</text>
</comment>
<name>EFP_STREM</name>
<organism>
    <name type="scientific">Streptococcus equi subsp. zooepidemicus (strain MGCS10565)</name>
    <dbReference type="NCBI Taxonomy" id="552526"/>
    <lineage>
        <taxon>Bacteria</taxon>
        <taxon>Bacillati</taxon>
        <taxon>Bacillota</taxon>
        <taxon>Bacilli</taxon>
        <taxon>Lactobacillales</taxon>
        <taxon>Streptococcaceae</taxon>
        <taxon>Streptococcus</taxon>
    </lineage>
</organism>
<keyword id="KW-0963">Cytoplasm</keyword>
<keyword id="KW-0251">Elongation factor</keyword>
<keyword id="KW-0648">Protein biosynthesis</keyword>